<gene>
    <name evidence="1" type="primary">L2</name>
</gene>
<accession>P08342</accession>
<proteinExistence type="inferred from homology"/>
<protein>
    <recommendedName>
        <fullName evidence="1">Minor capsid protein L2</fullName>
    </recommendedName>
</protein>
<name>VL2_BPV4</name>
<evidence type="ECO:0000255" key="1">
    <source>
        <dbReference type="HAMAP-Rule" id="MF_04003"/>
    </source>
</evidence>
<reference key="1">
    <citation type="journal article" date="1987" name="J. Gen. Virol.">
        <title>The nucleotide sequence and genome organization of bovine papillomavirus type 4.</title>
        <authorList>
            <person name="Patel K.R."/>
            <person name="Smith K.T."/>
            <person name="Campo M.S."/>
        </authorList>
    </citation>
    <scope>NUCLEOTIDE SEQUENCE [GENOMIC DNA]</scope>
</reference>
<feature type="chain" id="PRO_0000133563" description="Minor capsid protein L2">
    <location>
        <begin position="1"/>
        <end position="357"/>
    </location>
</feature>
<feature type="short sequence motif" description="Nuclear localization signal" evidence="1">
    <location>
        <begin position="1"/>
        <end position="10"/>
    </location>
</feature>
<feature type="disulfide bond" evidence="1">
    <location>
        <begin position="19"/>
        <end position="25"/>
    </location>
</feature>
<dbReference type="EMBL" id="X05817">
    <property type="status" value="NOT_ANNOTATED_CDS"/>
    <property type="molecule type" value="Genomic_DNA"/>
</dbReference>
<dbReference type="PIR" id="A26214">
    <property type="entry name" value="P2WLB4"/>
</dbReference>
<dbReference type="Proteomes" id="UP000007613">
    <property type="component" value="Segment"/>
</dbReference>
<dbReference type="GO" id="GO:0043657">
    <property type="term" value="C:host cell"/>
    <property type="evidence" value="ECO:0007669"/>
    <property type="project" value="GOC"/>
</dbReference>
<dbReference type="GO" id="GO:0044174">
    <property type="term" value="C:host cell endosome"/>
    <property type="evidence" value="ECO:0007669"/>
    <property type="project" value="UniProtKB-KW"/>
</dbReference>
<dbReference type="GO" id="GO:0044177">
    <property type="term" value="C:host cell Golgi apparatus"/>
    <property type="evidence" value="ECO:0007669"/>
    <property type="project" value="UniProtKB-SubCell"/>
</dbReference>
<dbReference type="GO" id="GO:0042025">
    <property type="term" value="C:host cell nucleus"/>
    <property type="evidence" value="ECO:0007669"/>
    <property type="project" value="UniProtKB-SubCell"/>
</dbReference>
<dbReference type="GO" id="GO:0019028">
    <property type="term" value="C:viral capsid"/>
    <property type="evidence" value="ECO:0007669"/>
    <property type="project" value="UniProtKB-UniRule"/>
</dbReference>
<dbReference type="GO" id="GO:0003677">
    <property type="term" value="F:DNA binding"/>
    <property type="evidence" value="ECO:0007669"/>
    <property type="project" value="UniProtKB-UniRule"/>
</dbReference>
<dbReference type="GO" id="GO:0005198">
    <property type="term" value="F:structural molecule activity"/>
    <property type="evidence" value="ECO:0007669"/>
    <property type="project" value="UniProtKB-UniRule"/>
</dbReference>
<dbReference type="GO" id="GO:0075521">
    <property type="term" value="P:microtubule-dependent intracellular transport of viral material towards nucleus"/>
    <property type="evidence" value="ECO:0007669"/>
    <property type="project" value="UniProtKB-UniRule"/>
</dbReference>
<dbReference type="GO" id="GO:0046718">
    <property type="term" value="P:symbiont entry into host cell"/>
    <property type="evidence" value="ECO:0007669"/>
    <property type="project" value="UniProtKB-KW"/>
</dbReference>
<dbReference type="GO" id="GO:0075732">
    <property type="term" value="P:viral penetration into host nucleus"/>
    <property type="evidence" value="ECO:0007669"/>
    <property type="project" value="UniProtKB-KW"/>
</dbReference>
<dbReference type="HAMAP" id="MF_04003">
    <property type="entry name" value="PPV_L2"/>
    <property type="match status" value="1"/>
</dbReference>
<dbReference type="InterPro" id="IPR000784">
    <property type="entry name" value="Late_L2"/>
</dbReference>
<dbReference type="Pfam" id="PF00513">
    <property type="entry name" value="Late_protein_L2"/>
    <property type="match status" value="1"/>
</dbReference>
<organism>
    <name type="scientific">Bos taurus papillomavirus 4</name>
    <name type="common">Bovine papillomavirus 4</name>
    <dbReference type="NCBI Taxonomy" id="10562"/>
    <lineage>
        <taxon>Viruses</taxon>
        <taxon>Monodnaviria</taxon>
        <taxon>Shotokuvirae</taxon>
        <taxon>Cossaviricota</taxon>
        <taxon>Papovaviricetes</taxon>
        <taxon>Zurhausenvirales</taxon>
        <taxon>Papillomaviridae</taxon>
        <taxon>Firstpapillomavirinae</taxon>
        <taxon>Xipapillomavirus</taxon>
        <taxon>Xipapillomavirus 1</taxon>
    </lineage>
</organism>
<keyword id="KW-0167">Capsid protein</keyword>
<keyword id="KW-1176">Cytoplasmic inwards viral transport</keyword>
<keyword id="KW-1015">Disulfide bond</keyword>
<keyword id="KW-0238">DNA-binding</keyword>
<keyword id="KW-1039">Host endosome</keyword>
<keyword id="KW-1040">Host Golgi apparatus</keyword>
<keyword id="KW-1048">Host nucleus</keyword>
<keyword id="KW-0945">Host-virus interaction</keyword>
<keyword id="KW-0426">Late protein</keyword>
<keyword id="KW-1177">Microtubular inwards viral transport</keyword>
<keyword id="KW-0597">Phosphoprotein</keyword>
<keyword id="KW-1163">Viral penetration into host nucleus</keyword>
<keyword id="KW-0946">Virion</keyword>
<keyword id="KW-1160">Virus entry into host cell</keyword>
<organismHost>
    <name type="scientific">Bos taurus</name>
    <name type="common">Bovine</name>
    <dbReference type="NCBI Taxonomy" id="9913"/>
</organismHost>
<sequence length="357" mass="38726">MVRAARRKRASEDDLYRGCRMGQDCPIDIKNKYEHNTLADRILKWVSSFLYFGQLGISSGKGTGGSTGYTPLGGRGGGGVTSGKGANVVRPTVIVDALGPTGVPIDPAVPDSSIVPLLESSGGSTTLDATPGAEIEIIAEVHPPPVYEGPEVTIGDIEEPPILEVVPETHPTSRVRSTTSKHDNPAFTAYVASAQLPGETSASDNVYILHGFNGDFVGQADPEGDTIFEEIPLEEFGVPDMPPSTSTPTSSFRSVLNKFQRRLYNRKLVQQVKITNRNTFLKQPSQFVQWEFDNPAYVDDSLSLIFQQDLDEVSAAPDADFQDIVKLSRPVFTTKEGLVRLSRLGQRGTIKTRMACK</sequence>
<comment type="function">
    <text evidence="1">Minor protein of the capsid that localizes along the inner surface of the virion, within the central cavities beneath the L1 pentamers. Plays a role in capsid stabilization through interaction with the major capsid protein L1. Once the virion enters the host cell, L2 escorts the genomic DNA into the nucleus by promoting escape from the endosomal compartments and traffic through the host Golgi network. Mechanistically, the C-terminus of L2 possesses a cell-penetrating peptide that protudes from the host endosome, interacts with host cytoplasmic retromer cargo and thereby mediates the capsid delivery to the host trans-Golgi network. Plays a role through its interaction with host dynein in the intracellular microtubule-dependent transport of viral capsid toward the nucleus. Mediates the viral genome import into the nucleus through binding to host importins. Once within the nucleus, L2 localizes viral genomes to host PML bodies in order to activate early gene expression for establishment of infection. Later on, promotes late gene expression by interacting with the viral E2 protein and by inhibiting its transcriptional activation functions. During virion assembly, encapsidates the genome by direct interaction with the viral DNA.</text>
</comment>
<comment type="subunit">
    <text evidence="1">Interacts with major capsid protein L1. Interacts with E2; this interaction inhibits E2 transcriptional activity but not the DNA replication function E2. Interacts with host GADD45GIP1. Interacts with host HSPA8; this interaction is required for L2 nuclear translocation. Interacts with host importins KPNB2 and KPNB3. Forms a complex with importin alpha2-beta1 heterodimers via interaction with the importin alpha2 adapter. Interacts with host DYNLT1; this interaction is essential for virus intracellular transport during entry. Interacts (via C-terminus) with host retromer subunits VPS35 and VPS29.</text>
</comment>
<comment type="subcellular location">
    <subcellularLocation>
        <location evidence="1">Virion</location>
    </subcellularLocation>
    <subcellularLocation>
        <location evidence="1">Host nucleus</location>
    </subcellularLocation>
    <subcellularLocation>
        <location evidence="1">Host early endosome</location>
    </subcellularLocation>
    <subcellularLocation>
        <location evidence="1">Host Golgi apparatus</location>
    </subcellularLocation>
</comment>
<comment type="PTM">
    <text evidence="1">Highly phosphorylated.</text>
</comment>
<comment type="similarity">
    <text evidence="1">Belongs to the papillomaviridae L2 protein family.</text>
</comment>